<sequence>MTLPHSPGSAGEPQASQTVQVHRLEHRQEEEQKEERQHSLQMGSSVQRRTYRSSEEEQQFSSEDYALAAALALTASSELSWEAKLRRQTTTVELEERGQRRVGFGNDLERMELAFLRTQRLLRQRRDWKALRQRTEEKVREAKELIELCSGRGPWFWIPLRSHAVWEHTTVLLTCTVQGSPPFQVTWYKNDIRIDPRLFPAGKYRITNNYGLLTLEIMRCTVEDSATYTVLVKNAYGQASSFAKVLIRNYLGKDAGFDSEIFKRSMFGPSAEFTSVLKPIFAQEKEPFSLTCLFSDDVLEAEQRIQWYRDGRLLRSSTRRQILYADRQASVKVSCAYKEDEGFYTIRVSSPFGPQEQSAYVFIRDAAAEKPGAPGSPLNVRCLNVHRDCLTLTWVPPSDTRGSTITGYSIEMCQGDSEEWMPCLKAPGGTCRCPIQGLVEGQSYQFRVRAISKAGTSLPSKASEAVVTGDYDAVHKSTEIPYDLGSKITISKNDFEDAVTIPSAPTNVHASEIREAYAVLSWEEPRPRGRAPLTYTLEKSVIGSGTWEAISTETPIKSPRFALLDLEKGKSYVFRVRALNQYGMSDPSEPSEPVALKGKPATLPPPAQVQAFRNTQTSVSLAWEPVDGGSELLGYYIYSREAGASEWQTVNNKPIQDTKFTVPGLRTGKEYDFCIRSVSEAGVGESSAATQPVRVKQALATPSAPYDFALLNCGKNEMVIGWKPPKRRGGGKILGYFMDQHDSVESDWHPVNRQPIPSRVCKVTNLHEGHFYEFRARAVNWAGIGELSAPSSLFECKEWTMPEPGPPYDVRVSEVQATSVMLQWEPPLYIGAGPVTGYHVSFQEKGSEEWKPVTPDATSDTHLRVSDLQPGKQYMFRVQAMNSAGLGQPSVPTDPVLLEDKPDAQEIEVGVDDEGQIYLAFEAPEAPDFPEFQWSKDYQGPPDPQRVEVEDEISKSKVILKEPDLQDLGIYSVVVPDADEDTSASHTLTEEELNKLKKLSHEIRNPVIKLISGWNVEILEQGEVRLWLEVEKLSPAAELHLIFNEKEIFSSPNRKINFDREKGLVEVIIQQLSEDDKGSYTAQLQDGKAKNQITLALVDDEFDKLLRKADAKRRDWKRKQGPYFQEPLTWKVTDDCQVLLSCKVTNTKKESRFQWFFQKKEAPHGQYNPPTGDGSLSIEGFSKENQGVYRAVVSDERGEDDTVLDLTGEALDAVLTELGRIGALSATPLKIQGTEEGIRLFSKVKYYNVDYMKTAWFHKDKRLESGDRVRAGTTLDEIWLHILDPKDSDKGKYTLEITAGKEVRQLSADLSGQAFDDALAEHQRLKALAVIEKNRAKVVRGLPDVATIMEDKTLCLTCVISGDPSPEISWLKNDQPISFFDRYHMEVKGTEVTVTIDKVTSEDSGRYGIFVKNKYGSETGQVTISVFKHGEEPKELKKK</sequence>
<feature type="chain" id="PRO_0000315395" description="Myomesin-3">
    <location>
        <begin position="1"/>
        <end position="1439"/>
    </location>
</feature>
<feature type="domain" description="Ig-like C2-type 1">
    <location>
        <begin position="154"/>
        <end position="246"/>
    </location>
</feature>
<feature type="domain" description="Ig-like C2-type 2">
    <location>
        <begin position="269"/>
        <end position="362"/>
    </location>
</feature>
<feature type="domain" description="Fibronectin type-III 1" evidence="3">
    <location>
        <begin position="376"/>
        <end position="471"/>
    </location>
</feature>
<feature type="domain" description="Fibronectin type-III 2" evidence="3">
    <location>
        <begin position="504"/>
        <end position="599"/>
    </location>
</feature>
<feature type="domain" description="Fibronectin type-III 3" evidence="3">
    <location>
        <begin position="605"/>
        <end position="698"/>
    </location>
</feature>
<feature type="domain" description="Fibronectin type-III 4" evidence="3">
    <location>
        <begin position="704"/>
        <end position="799"/>
    </location>
</feature>
<feature type="domain" description="Fibronectin type-III 5" evidence="3">
    <location>
        <begin position="806"/>
        <end position="901"/>
    </location>
</feature>
<feature type="domain" description="Ig-like C2-type 3">
    <location>
        <begin position="1122"/>
        <end position="1207"/>
    </location>
</feature>
<feature type="domain" description="Ig-like C2-type 4">
    <location>
        <begin position="1336"/>
        <end position="1425"/>
    </location>
</feature>
<feature type="region of interest" description="Disordered" evidence="4">
    <location>
        <begin position="1"/>
        <end position="57"/>
    </location>
</feature>
<feature type="coiled-coil region" evidence="2">
    <location>
        <begin position="119"/>
        <end position="149"/>
    </location>
</feature>
<feature type="compositionally biased region" description="Basic and acidic residues" evidence="4">
    <location>
        <begin position="22"/>
        <end position="38"/>
    </location>
</feature>
<feature type="compositionally biased region" description="Polar residues" evidence="4">
    <location>
        <begin position="39"/>
        <end position="48"/>
    </location>
</feature>
<protein>
    <recommendedName>
        <fullName>Myomesin-3</fullName>
    </recommendedName>
    <alternativeName>
        <fullName>Myomesin family member 3</fullName>
    </alternativeName>
</protein>
<evidence type="ECO:0000250" key="1"/>
<evidence type="ECO:0000255" key="2"/>
<evidence type="ECO:0000255" key="3">
    <source>
        <dbReference type="PROSITE-ProRule" id="PRU00316"/>
    </source>
</evidence>
<evidence type="ECO:0000256" key="4">
    <source>
        <dbReference type="SAM" id="MobiDB-lite"/>
    </source>
</evidence>
<evidence type="ECO:0000269" key="5">
    <source>
    </source>
</evidence>
<organism>
    <name type="scientific">Mus musculus</name>
    <name type="common">Mouse</name>
    <dbReference type="NCBI Taxonomy" id="10090"/>
    <lineage>
        <taxon>Eukaryota</taxon>
        <taxon>Metazoa</taxon>
        <taxon>Chordata</taxon>
        <taxon>Craniata</taxon>
        <taxon>Vertebrata</taxon>
        <taxon>Euteleostomi</taxon>
        <taxon>Mammalia</taxon>
        <taxon>Eutheria</taxon>
        <taxon>Euarchontoglires</taxon>
        <taxon>Glires</taxon>
        <taxon>Rodentia</taxon>
        <taxon>Myomorpha</taxon>
        <taxon>Muroidea</taxon>
        <taxon>Muridae</taxon>
        <taxon>Murinae</taxon>
        <taxon>Mus</taxon>
        <taxon>Mus</taxon>
    </lineage>
</organism>
<keyword id="KW-0175">Coiled coil</keyword>
<keyword id="KW-0963">Cytoplasm</keyword>
<keyword id="KW-0393">Immunoglobulin domain</keyword>
<keyword id="KW-1185">Reference proteome</keyword>
<keyword id="KW-0677">Repeat</keyword>
<proteinExistence type="evidence at protein level"/>
<gene>
    <name type="primary">Myom3</name>
</gene>
<name>MYOM3_MOUSE</name>
<comment type="function">
    <text evidence="1">May link the intermediate filament cytoskeleton to the M-disk of the myofibrils in striated muscle.</text>
</comment>
<comment type="subunit">
    <text evidence="5">Homodimer.</text>
</comment>
<comment type="subcellular location">
    <subcellularLocation>
        <location evidence="5">Cytoplasm</location>
        <location evidence="5">Myofibril</location>
        <location evidence="5">Sarcomere</location>
        <location evidence="5">M line</location>
    </subcellularLocation>
</comment>
<comment type="tissue specificity">
    <text evidence="5">Mainly expressed in slow muscle, extraocular muscle and embryonic/neonatal skeletal muscle (at protein level). Expression in skeletal muscle is fiber type specific, with the highest levels in type IIA fibers (intermediate speed) and lower levels in type I fibers.</text>
</comment>
<dbReference type="EMBL" id="AL662911">
    <property type="status" value="NOT_ANNOTATED_CDS"/>
    <property type="molecule type" value="Genomic_DNA"/>
</dbReference>
<dbReference type="CCDS" id="CCDS38921.1"/>
<dbReference type="RefSeq" id="NP_001078978.1">
    <property type="nucleotide sequence ID" value="NM_001085509.2"/>
</dbReference>
<dbReference type="SMR" id="A2ABU4"/>
<dbReference type="BioGRID" id="232446">
    <property type="interactions" value="4"/>
</dbReference>
<dbReference type="FunCoup" id="A2ABU4">
    <property type="interactions" value="19"/>
</dbReference>
<dbReference type="STRING" id="10090.ENSMUSP00000101480"/>
<dbReference type="GlyGen" id="A2ABU4">
    <property type="glycosylation" value="2 sites, 1 O-linked glycan (1 site)"/>
</dbReference>
<dbReference type="iPTMnet" id="A2ABU4"/>
<dbReference type="PhosphoSitePlus" id="A2ABU4"/>
<dbReference type="jPOST" id="A2ABU4"/>
<dbReference type="PaxDb" id="10090-ENSMUSP00000101480"/>
<dbReference type="PeptideAtlas" id="A2ABU4"/>
<dbReference type="ProteomicsDB" id="287594"/>
<dbReference type="Antibodypedia" id="30256">
    <property type="antibodies" value="64 antibodies from 19 providers"/>
</dbReference>
<dbReference type="Ensembl" id="ENSMUST00000105854.2">
    <property type="protein sequence ID" value="ENSMUSP00000101480.2"/>
    <property type="gene ID" value="ENSMUSG00000037139.16"/>
</dbReference>
<dbReference type="GeneID" id="242702"/>
<dbReference type="KEGG" id="mmu:242702"/>
<dbReference type="UCSC" id="uc008vgy.2">
    <property type="organism name" value="mouse"/>
</dbReference>
<dbReference type="AGR" id="MGI:2685280"/>
<dbReference type="CTD" id="127294"/>
<dbReference type="MGI" id="MGI:2685280">
    <property type="gene designation" value="Myom3"/>
</dbReference>
<dbReference type="VEuPathDB" id="HostDB:ENSMUSG00000037139"/>
<dbReference type="eggNOG" id="ENOG502RDUJ">
    <property type="taxonomic scope" value="Eukaryota"/>
</dbReference>
<dbReference type="GeneTree" id="ENSGT00940000158669"/>
<dbReference type="HOGENOM" id="CLU_004753_1_0_1"/>
<dbReference type="InParanoid" id="A2ABU4"/>
<dbReference type="OMA" id="VTNTNKD"/>
<dbReference type="OrthoDB" id="9936265at2759"/>
<dbReference type="PhylomeDB" id="A2ABU4"/>
<dbReference type="TreeFam" id="TF331825"/>
<dbReference type="BioGRID-ORCS" id="242702">
    <property type="hits" value="3 hits in 79 CRISPR screens"/>
</dbReference>
<dbReference type="PRO" id="PR:A2ABU4"/>
<dbReference type="Proteomes" id="UP000000589">
    <property type="component" value="Chromosome 4"/>
</dbReference>
<dbReference type="RNAct" id="A2ABU4">
    <property type="molecule type" value="protein"/>
</dbReference>
<dbReference type="Bgee" id="ENSMUSG00000037139">
    <property type="expression patterns" value="Expressed in extra-ocular muscle and 92 other cell types or tissues"/>
</dbReference>
<dbReference type="GO" id="GO:0031430">
    <property type="term" value="C:M band"/>
    <property type="evidence" value="ECO:0000314"/>
    <property type="project" value="UniProtKB"/>
</dbReference>
<dbReference type="GO" id="GO:0042802">
    <property type="term" value="F:identical protein binding"/>
    <property type="evidence" value="ECO:0000353"/>
    <property type="project" value="MGI"/>
</dbReference>
<dbReference type="GO" id="GO:0042803">
    <property type="term" value="F:protein homodimerization activity"/>
    <property type="evidence" value="ECO:0000314"/>
    <property type="project" value="UniProtKB"/>
</dbReference>
<dbReference type="CDD" id="cd00063">
    <property type="entry name" value="FN3"/>
    <property type="match status" value="5"/>
</dbReference>
<dbReference type="CDD" id="cd00096">
    <property type="entry name" value="Ig"/>
    <property type="match status" value="1"/>
</dbReference>
<dbReference type="FunFam" id="2.60.40.10:FF:000069">
    <property type="entry name" value="Alpha-protein kinase 3"/>
    <property type="match status" value="1"/>
</dbReference>
<dbReference type="FunFam" id="2.60.40.10:FF:000029">
    <property type="entry name" value="Myomesin 1"/>
    <property type="match status" value="3"/>
</dbReference>
<dbReference type="FunFam" id="2.60.40.10:FF:000124">
    <property type="entry name" value="Myomesin 1"/>
    <property type="match status" value="1"/>
</dbReference>
<dbReference type="FunFam" id="2.60.40.10:FF:000134">
    <property type="entry name" value="Myomesin 1"/>
    <property type="match status" value="1"/>
</dbReference>
<dbReference type="FunFam" id="2.60.40.10:FF:000192">
    <property type="entry name" value="Myomesin 1"/>
    <property type="match status" value="1"/>
</dbReference>
<dbReference type="FunFam" id="2.60.40.10:FF:000197">
    <property type="entry name" value="Myomesin 1"/>
    <property type="match status" value="1"/>
</dbReference>
<dbReference type="FunFam" id="2.60.40.10:FF:000233">
    <property type="entry name" value="Myomesin 1"/>
    <property type="match status" value="1"/>
</dbReference>
<dbReference type="FunFam" id="2.60.40.10:FF:000745">
    <property type="entry name" value="Myomesin 3"/>
    <property type="match status" value="1"/>
</dbReference>
<dbReference type="FunFam" id="2.60.40.10:FF:000821">
    <property type="entry name" value="Myomesin 3"/>
    <property type="match status" value="1"/>
</dbReference>
<dbReference type="FunFam" id="2.60.40.10:FF:001351">
    <property type="entry name" value="Myomesin 3"/>
    <property type="match status" value="1"/>
</dbReference>
<dbReference type="Gene3D" id="2.60.40.10">
    <property type="entry name" value="Immunoglobulins"/>
    <property type="match status" value="12"/>
</dbReference>
<dbReference type="InterPro" id="IPR003961">
    <property type="entry name" value="FN3_dom"/>
</dbReference>
<dbReference type="InterPro" id="IPR036116">
    <property type="entry name" value="FN3_sf"/>
</dbReference>
<dbReference type="InterPro" id="IPR007110">
    <property type="entry name" value="Ig-like_dom"/>
</dbReference>
<dbReference type="InterPro" id="IPR036179">
    <property type="entry name" value="Ig-like_dom_sf"/>
</dbReference>
<dbReference type="InterPro" id="IPR013783">
    <property type="entry name" value="Ig-like_fold"/>
</dbReference>
<dbReference type="InterPro" id="IPR013098">
    <property type="entry name" value="Ig_I-set"/>
</dbReference>
<dbReference type="InterPro" id="IPR003599">
    <property type="entry name" value="Ig_sub"/>
</dbReference>
<dbReference type="InterPro" id="IPR003598">
    <property type="entry name" value="Ig_sub2"/>
</dbReference>
<dbReference type="InterPro" id="IPR050964">
    <property type="entry name" value="Striated_Muscle_Regulatory"/>
</dbReference>
<dbReference type="PANTHER" id="PTHR13817">
    <property type="entry name" value="TITIN"/>
    <property type="match status" value="1"/>
</dbReference>
<dbReference type="PANTHER" id="PTHR13817:SF151">
    <property type="entry name" value="TITIN"/>
    <property type="match status" value="1"/>
</dbReference>
<dbReference type="Pfam" id="PF00041">
    <property type="entry name" value="fn3"/>
    <property type="match status" value="5"/>
</dbReference>
<dbReference type="Pfam" id="PF07679">
    <property type="entry name" value="I-set"/>
    <property type="match status" value="3"/>
</dbReference>
<dbReference type="PRINTS" id="PR00014">
    <property type="entry name" value="FNTYPEIII"/>
</dbReference>
<dbReference type="SMART" id="SM00060">
    <property type="entry name" value="FN3"/>
    <property type="match status" value="5"/>
</dbReference>
<dbReference type="SMART" id="SM00409">
    <property type="entry name" value="IG"/>
    <property type="match status" value="4"/>
</dbReference>
<dbReference type="SMART" id="SM00408">
    <property type="entry name" value="IGc2"/>
    <property type="match status" value="3"/>
</dbReference>
<dbReference type="SUPFAM" id="SSF49265">
    <property type="entry name" value="Fibronectin type III"/>
    <property type="match status" value="3"/>
</dbReference>
<dbReference type="SUPFAM" id="SSF48726">
    <property type="entry name" value="Immunoglobulin"/>
    <property type="match status" value="6"/>
</dbReference>
<dbReference type="PROSITE" id="PS50853">
    <property type="entry name" value="FN3"/>
    <property type="match status" value="5"/>
</dbReference>
<dbReference type="PROSITE" id="PS50835">
    <property type="entry name" value="IG_LIKE"/>
    <property type="match status" value="4"/>
</dbReference>
<reference key="1">
    <citation type="journal article" date="2009" name="PLoS Biol.">
        <title>Lineage-specific biology revealed by a finished genome assembly of the mouse.</title>
        <authorList>
            <person name="Church D.M."/>
            <person name="Goodstadt L."/>
            <person name="Hillier L.W."/>
            <person name="Zody M.C."/>
            <person name="Goldstein S."/>
            <person name="She X."/>
            <person name="Bult C.J."/>
            <person name="Agarwala R."/>
            <person name="Cherry J.L."/>
            <person name="DiCuccio M."/>
            <person name="Hlavina W."/>
            <person name="Kapustin Y."/>
            <person name="Meric P."/>
            <person name="Maglott D."/>
            <person name="Birtle Z."/>
            <person name="Marques A.C."/>
            <person name="Graves T."/>
            <person name="Zhou S."/>
            <person name="Teague B."/>
            <person name="Potamousis K."/>
            <person name="Churas C."/>
            <person name="Place M."/>
            <person name="Herschleb J."/>
            <person name="Runnheim R."/>
            <person name="Forrest D."/>
            <person name="Amos-Landgraf J."/>
            <person name="Schwartz D.C."/>
            <person name="Cheng Z."/>
            <person name="Lindblad-Toh K."/>
            <person name="Eichler E.E."/>
            <person name="Ponting C.P."/>
        </authorList>
    </citation>
    <scope>NUCLEOTIDE SEQUENCE [LARGE SCALE GENOMIC DNA]</scope>
    <source>
        <strain>C57BL/6J</strain>
    </source>
</reference>
<reference key="2">
    <citation type="journal article" date="2008" name="J. Mol. Biol.">
        <title>Myomesin 3, a novel structural component of the M-band in striated muscle.</title>
        <authorList>
            <person name="Schoenauer R."/>
            <person name="Lange S."/>
            <person name="Hirschy A."/>
            <person name="Ehler E."/>
            <person name="Perriard J.C."/>
            <person name="Agarkova I."/>
        </authorList>
    </citation>
    <scope>SUBUNIT</scope>
    <scope>SUBCELLULAR LOCATION</scope>
    <scope>TISSUE SPECIFICITY</scope>
</reference>
<accession>A2ABU4</accession>